<accession>A0AIB4</accession>
<dbReference type="EC" id="2.7.4.22" evidence="1"/>
<dbReference type="EMBL" id="AM263198">
    <property type="protein sequence ID" value="CAK20746.1"/>
    <property type="molecule type" value="Genomic_DNA"/>
</dbReference>
<dbReference type="RefSeq" id="WP_003723449.1">
    <property type="nucleotide sequence ID" value="NC_008555.1"/>
</dbReference>
<dbReference type="SMR" id="A0AIB4"/>
<dbReference type="STRING" id="386043.lwe1328"/>
<dbReference type="GeneID" id="93239189"/>
<dbReference type="KEGG" id="lwe:lwe1328"/>
<dbReference type="eggNOG" id="COG0528">
    <property type="taxonomic scope" value="Bacteria"/>
</dbReference>
<dbReference type="HOGENOM" id="CLU_033861_0_0_9"/>
<dbReference type="OrthoDB" id="9807458at2"/>
<dbReference type="UniPathway" id="UPA00159">
    <property type="reaction ID" value="UER00275"/>
</dbReference>
<dbReference type="Proteomes" id="UP000000779">
    <property type="component" value="Chromosome"/>
</dbReference>
<dbReference type="GO" id="GO:0005737">
    <property type="term" value="C:cytoplasm"/>
    <property type="evidence" value="ECO:0007669"/>
    <property type="project" value="UniProtKB-SubCell"/>
</dbReference>
<dbReference type="GO" id="GO:0005524">
    <property type="term" value="F:ATP binding"/>
    <property type="evidence" value="ECO:0007669"/>
    <property type="project" value="UniProtKB-KW"/>
</dbReference>
<dbReference type="GO" id="GO:0033862">
    <property type="term" value="F:UMP kinase activity"/>
    <property type="evidence" value="ECO:0007669"/>
    <property type="project" value="UniProtKB-EC"/>
</dbReference>
<dbReference type="GO" id="GO:0044210">
    <property type="term" value="P:'de novo' CTP biosynthetic process"/>
    <property type="evidence" value="ECO:0007669"/>
    <property type="project" value="UniProtKB-UniRule"/>
</dbReference>
<dbReference type="GO" id="GO:0006225">
    <property type="term" value="P:UDP biosynthetic process"/>
    <property type="evidence" value="ECO:0007669"/>
    <property type="project" value="TreeGrafter"/>
</dbReference>
<dbReference type="CDD" id="cd04254">
    <property type="entry name" value="AAK_UMPK-PyrH-Ec"/>
    <property type="match status" value="1"/>
</dbReference>
<dbReference type="FunFam" id="3.40.1160.10:FF:000001">
    <property type="entry name" value="Uridylate kinase"/>
    <property type="match status" value="1"/>
</dbReference>
<dbReference type="Gene3D" id="3.40.1160.10">
    <property type="entry name" value="Acetylglutamate kinase-like"/>
    <property type="match status" value="1"/>
</dbReference>
<dbReference type="HAMAP" id="MF_01220_B">
    <property type="entry name" value="PyrH_B"/>
    <property type="match status" value="1"/>
</dbReference>
<dbReference type="InterPro" id="IPR036393">
    <property type="entry name" value="AceGlu_kinase-like_sf"/>
</dbReference>
<dbReference type="InterPro" id="IPR001048">
    <property type="entry name" value="Asp/Glu/Uridylate_kinase"/>
</dbReference>
<dbReference type="InterPro" id="IPR011817">
    <property type="entry name" value="Uridylate_kinase"/>
</dbReference>
<dbReference type="InterPro" id="IPR015963">
    <property type="entry name" value="Uridylate_kinase_bac"/>
</dbReference>
<dbReference type="NCBIfam" id="TIGR02075">
    <property type="entry name" value="pyrH_bact"/>
    <property type="match status" value="1"/>
</dbReference>
<dbReference type="PANTHER" id="PTHR42833">
    <property type="entry name" value="URIDYLATE KINASE"/>
    <property type="match status" value="1"/>
</dbReference>
<dbReference type="PANTHER" id="PTHR42833:SF4">
    <property type="entry name" value="URIDYLATE KINASE PUMPKIN, CHLOROPLASTIC"/>
    <property type="match status" value="1"/>
</dbReference>
<dbReference type="Pfam" id="PF00696">
    <property type="entry name" value="AA_kinase"/>
    <property type="match status" value="1"/>
</dbReference>
<dbReference type="PIRSF" id="PIRSF005650">
    <property type="entry name" value="Uridylate_kin"/>
    <property type="match status" value="1"/>
</dbReference>
<dbReference type="SUPFAM" id="SSF53633">
    <property type="entry name" value="Carbamate kinase-like"/>
    <property type="match status" value="1"/>
</dbReference>
<reference key="1">
    <citation type="journal article" date="2006" name="J. Bacteriol.">
        <title>Whole-genome sequence of Listeria welshimeri reveals common steps in genome reduction with Listeria innocua as compared to Listeria monocytogenes.</title>
        <authorList>
            <person name="Hain T."/>
            <person name="Steinweg C."/>
            <person name="Kuenne C.T."/>
            <person name="Billion A."/>
            <person name="Ghai R."/>
            <person name="Chatterjee S.S."/>
            <person name="Domann E."/>
            <person name="Kaerst U."/>
            <person name="Goesmann A."/>
            <person name="Bekel T."/>
            <person name="Bartels D."/>
            <person name="Kaiser O."/>
            <person name="Meyer F."/>
            <person name="Puehler A."/>
            <person name="Weisshaar B."/>
            <person name="Wehland J."/>
            <person name="Liang C."/>
            <person name="Dandekar T."/>
            <person name="Lampidis R."/>
            <person name="Kreft J."/>
            <person name="Goebel W."/>
            <person name="Chakraborty T."/>
        </authorList>
    </citation>
    <scope>NUCLEOTIDE SEQUENCE [LARGE SCALE GENOMIC DNA]</scope>
    <source>
        <strain>ATCC 35897 / DSM 20650 / CCUG 15529 / CIP 8149 / NCTC 11857 / SLCC 5334 / V8</strain>
    </source>
</reference>
<organism>
    <name type="scientific">Listeria welshimeri serovar 6b (strain ATCC 35897 / DSM 20650 / CCUG 15529 / CIP 8149 / NCTC 11857 / SLCC 5334 / V8)</name>
    <dbReference type="NCBI Taxonomy" id="386043"/>
    <lineage>
        <taxon>Bacteria</taxon>
        <taxon>Bacillati</taxon>
        <taxon>Bacillota</taxon>
        <taxon>Bacilli</taxon>
        <taxon>Bacillales</taxon>
        <taxon>Listeriaceae</taxon>
        <taxon>Listeria</taxon>
    </lineage>
</organism>
<comment type="function">
    <text evidence="1">Catalyzes the reversible phosphorylation of UMP to UDP.</text>
</comment>
<comment type="catalytic activity">
    <reaction evidence="1">
        <text>UMP + ATP = UDP + ADP</text>
        <dbReference type="Rhea" id="RHEA:24400"/>
        <dbReference type="ChEBI" id="CHEBI:30616"/>
        <dbReference type="ChEBI" id="CHEBI:57865"/>
        <dbReference type="ChEBI" id="CHEBI:58223"/>
        <dbReference type="ChEBI" id="CHEBI:456216"/>
        <dbReference type="EC" id="2.7.4.22"/>
    </reaction>
</comment>
<comment type="activity regulation">
    <text evidence="1">Allosterically activated by GTP. Inhibited by UTP.</text>
</comment>
<comment type="pathway">
    <text evidence="1">Pyrimidine metabolism; CTP biosynthesis via de novo pathway; UDP from UMP (UMPK route): step 1/1.</text>
</comment>
<comment type="subunit">
    <text evidence="1">Homohexamer.</text>
</comment>
<comment type="subcellular location">
    <subcellularLocation>
        <location evidence="1">Cytoplasm</location>
    </subcellularLocation>
</comment>
<comment type="similarity">
    <text evidence="1">Belongs to the UMP kinase family.</text>
</comment>
<sequence>MDTPDYKRVVLKLSGEALAGNDGFGINPSVVNLISAQIKEVVELGVEVAIVVGGGNIWRGKLGSEMGMDRAAADQMGMLATIMNSLSLQDSLENIGVATRVQTSIDMRQIAEPYIRRKAIRHLEKGRVVIFAGGTGNPYFSTDTAAALRAAEIEADVILMAKNNVDGVYNADPKLDENAKKYEELSYLDVIKEGLEVMDTTASSLSMDNDIPLIVFSFTEQGNNIKRVILGEKIGTTVRGKK</sequence>
<gene>
    <name evidence="1" type="primary">pyrH</name>
    <name type="ordered locus">lwe1328</name>
</gene>
<protein>
    <recommendedName>
        <fullName evidence="1">Uridylate kinase</fullName>
        <shortName evidence="1">UK</shortName>
        <ecNumber evidence="1">2.7.4.22</ecNumber>
    </recommendedName>
    <alternativeName>
        <fullName evidence="1">Uridine monophosphate kinase</fullName>
        <shortName evidence="1">UMP kinase</shortName>
        <shortName evidence="1">UMPK</shortName>
    </alternativeName>
</protein>
<proteinExistence type="inferred from homology"/>
<keyword id="KW-0021">Allosteric enzyme</keyword>
<keyword id="KW-0067">ATP-binding</keyword>
<keyword id="KW-0963">Cytoplasm</keyword>
<keyword id="KW-0418">Kinase</keyword>
<keyword id="KW-0547">Nucleotide-binding</keyword>
<keyword id="KW-0665">Pyrimidine biosynthesis</keyword>
<keyword id="KW-0808">Transferase</keyword>
<feature type="chain" id="PRO_1000053948" description="Uridylate kinase">
    <location>
        <begin position="1"/>
        <end position="242"/>
    </location>
</feature>
<feature type="region of interest" description="Involved in allosteric activation by GTP" evidence="1">
    <location>
        <begin position="20"/>
        <end position="25"/>
    </location>
</feature>
<feature type="binding site" evidence="1">
    <location>
        <begin position="12"/>
        <end position="15"/>
    </location>
    <ligand>
        <name>ATP</name>
        <dbReference type="ChEBI" id="CHEBI:30616"/>
    </ligand>
</feature>
<feature type="binding site" evidence="1">
    <location>
        <position position="54"/>
    </location>
    <ligand>
        <name>UMP</name>
        <dbReference type="ChEBI" id="CHEBI:57865"/>
    </ligand>
</feature>
<feature type="binding site" evidence="1">
    <location>
        <position position="55"/>
    </location>
    <ligand>
        <name>ATP</name>
        <dbReference type="ChEBI" id="CHEBI:30616"/>
    </ligand>
</feature>
<feature type="binding site" evidence="1">
    <location>
        <position position="59"/>
    </location>
    <ligand>
        <name>ATP</name>
        <dbReference type="ChEBI" id="CHEBI:30616"/>
    </ligand>
</feature>
<feature type="binding site" evidence="1">
    <location>
        <position position="74"/>
    </location>
    <ligand>
        <name>UMP</name>
        <dbReference type="ChEBI" id="CHEBI:57865"/>
    </ligand>
</feature>
<feature type="binding site" evidence="1">
    <location>
        <begin position="135"/>
        <end position="142"/>
    </location>
    <ligand>
        <name>UMP</name>
        <dbReference type="ChEBI" id="CHEBI:57865"/>
    </ligand>
</feature>
<feature type="binding site" evidence="1">
    <location>
        <position position="163"/>
    </location>
    <ligand>
        <name>ATP</name>
        <dbReference type="ChEBI" id="CHEBI:30616"/>
    </ligand>
</feature>
<feature type="binding site" evidence="1">
    <location>
        <position position="169"/>
    </location>
    <ligand>
        <name>ATP</name>
        <dbReference type="ChEBI" id="CHEBI:30616"/>
    </ligand>
</feature>
<feature type="binding site" evidence="1">
    <location>
        <position position="172"/>
    </location>
    <ligand>
        <name>ATP</name>
        <dbReference type="ChEBI" id="CHEBI:30616"/>
    </ligand>
</feature>
<name>PYRH_LISW6</name>
<evidence type="ECO:0000255" key="1">
    <source>
        <dbReference type="HAMAP-Rule" id="MF_01220"/>
    </source>
</evidence>